<dbReference type="EC" id="1.1.1.100"/>
<dbReference type="EMBL" id="U91631">
    <property type="protein sequence ID" value="AAB94395.1"/>
    <property type="molecule type" value="Genomic_DNA"/>
</dbReference>
<dbReference type="EMBL" id="AE004091">
    <property type="protein sequence ID" value="AAG06355.1"/>
    <property type="molecule type" value="Genomic_DNA"/>
</dbReference>
<dbReference type="PIR" id="T12020">
    <property type="entry name" value="T12020"/>
</dbReference>
<dbReference type="RefSeq" id="NP_251657.1">
    <property type="nucleotide sequence ID" value="NC_002516.2"/>
</dbReference>
<dbReference type="RefSeq" id="WP_003091137.1">
    <property type="nucleotide sequence ID" value="NZ_QZGE01000009.1"/>
</dbReference>
<dbReference type="PDB" id="4AFN">
    <property type="method" value="X-ray"/>
    <property type="resolution" value="2.30 A"/>
    <property type="chains" value="A/B/C/D=1-247"/>
</dbReference>
<dbReference type="PDB" id="4AG3">
    <property type="method" value="X-ray"/>
    <property type="resolution" value="1.80 A"/>
    <property type="chains" value="A/B/C/D=1-247"/>
</dbReference>
<dbReference type="PDB" id="4BNT">
    <property type="method" value="X-ray"/>
    <property type="resolution" value="2.30 A"/>
    <property type="chains" value="A/B/C/D=1-247"/>
</dbReference>
<dbReference type="PDB" id="4BNU">
    <property type="method" value="X-ray"/>
    <property type="resolution" value="2.00 A"/>
    <property type="chains" value="A/B/C/D=1-247"/>
</dbReference>
<dbReference type="PDB" id="4BNV">
    <property type="method" value="X-ray"/>
    <property type="resolution" value="2.50 A"/>
    <property type="chains" value="A/B/C/D=1-247"/>
</dbReference>
<dbReference type="PDB" id="4BNW">
    <property type="method" value="X-ray"/>
    <property type="resolution" value="1.60 A"/>
    <property type="chains" value="A/B/C/D=1-247"/>
</dbReference>
<dbReference type="PDB" id="4BNX">
    <property type="method" value="X-ray"/>
    <property type="resolution" value="2.30 A"/>
    <property type="chains" value="A/B/C/D=1-247"/>
</dbReference>
<dbReference type="PDB" id="4BNY">
    <property type="method" value="X-ray"/>
    <property type="resolution" value="1.80 A"/>
    <property type="chains" value="A/B/C/D=1-247"/>
</dbReference>
<dbReference type="PDB" id="4BNZ">
    <property type="method" value="X-ray"/>
    <property type="resolution" value="2.50 A"/>
    <property type="chains" value="A/B/C/D=1-247"/>
</dbReference>
<dbReference type="PDB" id="4BO0">
    <property type="method" value="X-ray"/>
    <property type="resolution" value="2.40 A"/>
    <property type="chains" value="A/B/C/D=1-247"/>
</dbReference>
<dbReference type="PDB" id="4BO1">
    <property type="method" value="X-ray"/>
    <property type="resolution" value="2.20 A"/>
    <property type="chains" value="A/B/C/D=1-247"/>
</dbReference>
<dbReference type="PDB" id="4BO2">
    <property type="method" value="X-ray"/>
    <property type="resolution" value="1.90 A"/>
    <property type="chains" value="A/B/C/D=1-247"/>
</dbReference>
<dbReference type="PDB" id="4BO3">
    <property type="method" value="X-ray"/>
    <property type="resolution" value="2.50 A"/>
    <property type="chains" value="A/B/C/D=1-247"/>
</dbReference>
<dbReference type="PDB" id="4BO4">
    <property type="method" value="X-ray"/>
    <property type="resolution" value="2.70 A"/>
    <property type="chains" value="A/B/C/D=1-247"/>
</dbReference>
<dbReference type="PDB" id="4BO5">
    <property type="method" value="X-ray"/>
    <property type="resolution" value="2.60 A"/>
    <property type="chains" value="A/B/C/D=1-247"/>
</dbReference>
<dbReference type="PDB" id="4BO6">
    <property type="method" value="X-ray"/>
    <property type="resolution" value="2.80 A"/>
    <property type="chains" value="A/B/C/D=1-247"/>
</dbReference>
<dbReference type="PDB" id="4BO7">
    <property type="method" value="X-ray"/>
    <property type="resolution" value="2.60 A"/>
    <property type="chains" value="A/B/C/D=1-247"/>
</dbReference>
<dbReference type="PDB" id="4BO8">
    <property type="method" value="X-ray"/>
    <property type="resolution" value="2.70 A"/>
    <property type="chains" value="A/B/C/D=1-247"/>
</dbReference>
<dbReference type="PDB" id="4BO9">
    <property type="method" value="X-ray"/>
    <property type="resolution" value="2.90 A"/>
    <property type="chains" value="A/B/C/D=1-247"/>
</dbReference>
<dbReference type="PDBsum" id="4AFN"/>
<dbReference type="PDBsum" id="4AG3"/>
<dbReference type="PDBsum" id="4BNT"/>
<dbReference type="PDBsum" id="4BNU"/>
<dbReference type="PDBsum" id="4BNV"/>
<dbReference type="PDBsum" id="4BNW"/>
<dbReference type="PDBsum" id="4BNX"/>
<dbReference type="PDBsum" id="4BNY"/>
<dbReference type="PDBsum" id="4BNZ"/>
<dbReference type="PDBsum" id="4BO0"/>
<dbReference type="PDBsum" id="4BO1"/>
<dbReference type="PDBsum" id="4BO2"/>
<dbReference type="PDBsum" id="4BO3"/>
<dbReference type="PDBsum" id="4BO4"/>
<dbReference type="PDBsum" id="4BO5"/>
<dbReference type="PDBsum" id="4BO6"/>
<dbReference type="PDBsum" id="4BO7"/>
<dbReference type="PDBsum" id="4BO8"/>
<dbReference type="PDBsum" id="4BO9"/>
<dbReference type="SMR" id="O54438"/>
<dbReference type="FunCoup" id="O54438">
    <property type="interactions" value="767"/>
</dbReference>
<dbReference type="STRING" id="208964.PA2967"/>
<dbReference type="PaxDb" id="208964-PA2967"/>
<dbReference type="DNASU" id="880433"/>
<dbReference type="GeneID" id="880433"/>
<dbReference type="KEGG" id="pae:PA2967"/>
<dbReference type="PATRIC" id="fig|208964.12.peg.3113"/>
<dbReference type="PseudoCAP" id="PA2967"/>
<dbReference type="HOGENOM" id="CLU_010194_1_3_6"/>
<dbReference type="InParanoid" id="O54438"/>
<dbReference type="OrthoDB" id="9804774at2"/>
<dbReference type="PhylomeDB" id="O54438"/>
<dbReference type="BioCyc" id="PAER208964:G1FZ6-3019-MONOMER"/>
<dbReference type="BRENDA" id="1.1.1.100">
    <property type="organism ID" value="5087"/>
</dbReference>
<dbReference type="UniPathway" id="UPA00094"/>
<dbReference type="EvolutionaryTrace" id="O54438"/>
<dbReference type="Proteomes" id="UP000002438">
    <property type="component" value="Chromosome"/>
</dbReference>
<dbReference type="GO" id="GO:0004316">
    <property type="term" value="F:3-oxoacyl-[acyl-carrier-protein] reductase (NADPH) activity"/>
    <property type="evidence" value="ECO:0000250"/>
    <property type="project" value="UniProtKB"/>
</dbReference>
<dbReference type="GO" id="GO:0051287">
    <property type="term" value="F:NAD binding"/>
    <property type="evidence" value="ECO:0007669"/>
    <property type="project" value="InterPro"/>
</dbReference>
<dbReference type="GO" id="GO:0050661">
    <property type="term" value="F:NADP binding"/>
    <property type="evidence" value="ECO:0000250"/>
    <property type="project" value="UniProtKB"/>
</dbReference>
<dbReference type="GO" id="GO:0016616">
    <property type="term" value="F:oxidoreductase activity, acting on the CH-OH group of donors, NAD or NADP as acceptor"/>
    <property type="evidence" value="ECO:0000318"/>
    <property type="project" value="GO_Central"/>
</dbReference>
<dbReference type="GO" id="GO:0030497">
    <property type="term" value="P:fatty acid elongation"/>
    <property type="evidence" value="ECO:0000250"/>
    <property type="project" value="UniProtKB"/>
</dbReference>
<dbReference type="CDD" id="cd05333">
    <property type="entry name" value="BKR_SDR_c"/>
    <property type="match status" value="1"/>
</dbReference>
<dbReference type="FunFam" id="3.40.50.720:FF:000037">
    <property type="entry name" value="3-oxoacyl-[acyl-carrier-protein] reductase FabG"/>
    <property type="match status" value="1"/>
</dbReference>
<dbReference type="Gene3D" id="3.40.50.720">
    <property type="entry name" value="NAD(P)-binding Rossmann-like Domain"/>
    <property type="match status" value="1"/>
</dbReference>
<dbReference type="InterPro" id="IPR011284">
    <property type="entry name" value="3oxo_ACP_reduc"/>
</dbReference>
<dbReference type="InterPro" id="IPR036291">
    <property type="entry name" value="NAD(P)-bd_dom_sf"/>
</dbReference>
<dbReference type="InterPro" id="IPR020904">
    <property type="entry name" value="Sc_DH/Rdtase_CS"/>
</dbReference>
<dbReference type="InterPro" id="IPR050259">
    <property type="entry name" value="SDR"/>
</dbReference>
<dbReference type="InterPro" id="IPR002347">
    <property type="entry name" value="SDR_fam"/>
</dbReference>
<dbReference type="NCBIfam" id="TIGR01830">
    <property type="entry name" value="3oxo_ACP_reduc"/>
    <property type="match status" value="1"/>
</dbReference>
<dbReference type="NCBIfam" id="NF004197">
    <property type="entry name" value="PRK05653.1-1"/>
    <property type="match status" value="1"/>
</dbReference>
<dbReference type="NCBIfam" id="NF009466">
    <property type="entry name" value="PRK12826.1-2"/>
    <property type="match status" value="1"/>
</dbReference>
<dbReference type="PANTHER" id="PTHR42879">
    <property type="entry name" value="3-OXOACYL-(ACYL-CARRIER-PROTEIN) REDUCTASE"/>
    <property type="match status" value="1"/>
</dbReference>
<dbReference type="PANTHER" id="PTHR42879:SF2">
    <property type="entry name" value="3-OXOACYL-[ACYL-CARRIER-PROTEIN] REDUCTASE FABG"/>
    <property type="match status" value="1"/>
</dbReference>
<dbReference type="Pfam" id="PF13561">
    <property type="entry name" value="adh_short_C2"/>
    <property type="match status" value="1"/>
</dbReference>
<dbReference type="PRINTS" id="PR00081">
    <property type="entry name" value="GDHRDH"/>
</dbReference>
<dbReference type="PRINTS" id="PR00080">
    <property type="entry name" value="SDRFAMILY"/>
</dbReference>
<dbReference type="SMART" id="SM00822">
    <property type="entry name" value="PKS_KR"/>
    <property type="match status" value="1"/>
</dbReference>
<dbReference type="SUPFAM" id="SSF51735">
    <property type="entry name" value="NAD(P)-binding Rossmann-fold domains"/>
    <property type="match status" value="1"/>
</dbReference>
<dbReference type="PROSITE" id="PS00061">
    <property type="entry name" value="ADH_SHORT"/>
    <property type="match status" value="1"/>
</dbReference>
<organism>
    <name type="scientific">Pseudomonas aeruginosa (strain ATCC 15692 / DSM 22644 / CIP 104116 / JCM 14847 / LMG 12228 / 1C / PRS 101 / PAO1)</name>
    <dbReference type="NCBI Taxonomy" id="208964"/>
    <lineage>
        <taxon>Bacteria</taxon>
        <taxon>Pseudomonadati</taxon>
        <taxon>Pseudomonadota</taxon>
        <taxon>Gammaproteobacteria</taxon>
        <taxon>Pseudomonadales</taxon>
        <taxon>Pseudomonadaceae</taxon>
        <taxon>Pseudomonas</taxon>
    </lineage>
</organism>
<feature type="chain" id="PRO_0000054678" description="3-oxoacyl-[acyl-carrier-protein] reductase FabG">
    <location>
        <begin position="1"/>
        <end position="247"/>
    </location>
</feature>
<feature type="active site" description="Proton acceptor" evidence="2">
    <location>
        <position position="154"/>
    </location>
</feature>
<feature type="binding site" evidence="1">
    <location>
        <begin position="12"/>
        <end position="15"/>
    </location>
    <ligand>
        <name>NADP(+)</name>
        <dbReference type="ChEBI" id="CHEBI:58349"/>
    </ligand>
</feature>
<feature type="binding site" evidence="1">
    <location>
        <position position="37"/>
    </location>
    <ligand>
        <name>NADP(+)</name>
        <dbReference type="ChEBI" id="CHEBI:58349"/>
    </ligand>
</feature>
<feature type="binding site" evidence="1">
    <location>
        <begin position="62"/>
        <end position="63"/>
    </location>
    <ligand>
        <name>NADP(+)</name>
        <dbReference type="ChEBI" id="CHEBI:58349"/>
    </ligand>
</feature>
<feature type="binding site" evidence="1">
    <location>
        <position position="89"/>
    </location>
    <ligand>
        <name>NADP(+)</name>
        <dbReference type="ChEBI" id="CHEBI:58349"/>
    </ligand>
</feature>
<feature type="binding site" evidence="1">
    <location>
        <position position="141"/>
    </location>
    <ligand>
        <name>substrate</name>
    </ligand>
</feature>
<feature type="binding site" evidence="1">
    <location>
        <begin position="154"/>
        <end position="158"/>
    </location>
    <ligand>
        <name>NADP(+)</name>
        <dbReference type="ChEBI" id="CHEBI:58349"/>
    </ligand>
</feature>
<feature type="binding site" evidence="1">
    <location>
        <position position="187"/>
    </location>
    <ligand>
        <name>NADP(+)</name>
        <dbReference type="ChEBI" id="CHEBI:58349"/>
    </ligand>
</feature>
<feature type="turn" evidence="4">
    <location>
        <begin position="2"/>
        <end position="5"/>
    </location>
</feature>
<feature type="strand" evidence="6">
    <location>
        <begin position="7"/>
        <end position="12"/>
    </location>
</feature>
<feature type="helix" evidence="6">
    <location>
        <begin position="16"/>
        <end position="27"/>
    </location>
</feature>
<feature type="strand" evidence="6">
    <location>
        <begin position="31"/>
        <end position="38"/>
    </location>
</feature>
<feature type="helix" evidence="6">
    <location>
        <begin position="39"/>
        <end position="50"/>
    </location>
</feature>
<feature type="turn" evidence="6">
    <location>
        <begin position="51"/>
        <end position="53"/>
    </location>
</feature>
<feature type="strand" evidence="6">
    <location>
        <begin position="56"/>
        <end position="60"/>
    </location>
</feature>
<feature type="helix" evidence="6">
    <location>
        <begin position="66"/>
        <end position="79"/>
    </location>
</feature>
<feature type="strand" evidence="6">
    <location>
        <begin position="85"/>
        <end position="88"/>
    </location>
</feature>
<feature type="helix" evidence="4">
    <location>
        <begin position="98"/>
        <end position="100"/>
    </location>
</feature>
<feature type="helix" evidence="5">
    <location>
        <begin position="103"/>
        <end position="105"/>
    </location>
</feature>
<feature type="helix" evidence="6">
    <location>
        <begin position="106"/>
        <end position="131"/>
    </location>
</feature>
<feature type="strand" evidence="6">
    <location>
        <begin position="134"/>
        <end position="139"/>
    </location>
</feature>
<feature type="helix" evidence="4">
    <location>
        <begin position="142"/>
        <end position="146"/>
    </location>
</feature>
<feature type="helix" evidence="6">
    <location>
        <begin position="147"/>
        <end position="172"/>
    </location>
</feature>
<feature type="helix" evidence="6">
    <location>
        <begin position="173"/>
        <end position="175"/>
    </location>
</feature>
<feature type="strand" evidence="6">
    <location>
        <begin position="177"/>
        <end position="184"/>
    </location>
</feature>
<feature type="strand" evidence="4">
    <location>
        <begin position="186"/>
        <end position="189"/>
    </location>
</feature>
<feature type="turn" evidence="6">
    <location>
        <begin position="190"/>
        <end position="194"/>
    </location>
</feature>
<feature type="helix" evidence="6">
    <location>
        <begin position="197"/>
        <end position="205"/>
    </location>
</feature>
<feature type="helix" evidence="6">
    <location>
        <begin position="215"/>
        <end position="226"/>
    </location>
</feature>
<feature type="helix" evidence="6">
    <location>
        <begin position="228"/>
        <end position="230"/>
    </location>
</feature>
<feature type="strand" evidence="6">
    <location>
        <begin position="237"/>
        <end position="241"/>
    </location>
</feature>
<evidence type="ECO:0000250" key="1"/>
<evidence type="ECO:0000255" key="2">
    <source>
        <dbReference type="PROSITE-ProRule" id="PRU10001"/>
    </source>
</evidence>
<evidence type="ECO:0000305" key="3"/>
<evidence type="ECO:0007829" key="4">
    <source>
        <dbReference type="PDB" id="4AG3"/>
    </source>
</evidence>
<evidence type="ECO:0007829" key="5">
    <source>
        <dbReference type="PDB" id="4BNT"/>
    </source>
</evidence>
<evidence type="ECO:0007829" key="6">
    <source>
        <dbReference type="PDB" id="4BNW"/>
    </source>
</evidence>
<protein>
    <recommendedName>
        <fullName>3-oxoacyl-[acyl-carrier-protein] reductase FabG</fullName>
        <ecNumber>1.1.1.100</ecNumber>
    </recommendedName>
    <alternativeName>
        <fullName>3-ketoacyl-acyl carrier protein reductase</fullName>
    </alternativeName>
    <alternativeName>
        <fullName>Beta-Ketoacyl-acyl carrier protein reductase</fullName>
    </alternativeName>
    <alternativeName>
        <fullName>Beta-ketoacyl-ACP reductase</fullName>
    </alternativeName>
</protein>
<name>FABG_PSEAE</name>
<accession>O54438</accession>
<proteinExistence type="evidence at protein level"/>
<sequence>MSLQGKVALVTGASRGIGQAIALELGRLGAVVIGTATSASGAEKIAETLKANGVEGAGLVLDVSSDESVAATLEHIQQHLGQPLIVVNNAGITRDNLLVRMKDDEWFDVVNTNLNSLYRLSKAVLRGMTKARWGRIINIGSVVGAMGNAGQTNYAAAKAGLEGFTRALAREVGSRAITVNAVAPGFIDTDMTRELPEAQREALLGQIPLGRLGQAEEIAKVVGFLASDGAAYVTGATVPVNGGMYMS</sequence>
<gene>
    <name type="primary">fabG</name>
    <name type="ordered locus">PA2967</name>
</gene>
<comment type="function">
    <text evidence="1">Catalyzes the NADPH-dependent reduction of beta-ketoacyl-ACP substrates to beta-hydroxyacyl-ACP products, the first reductive step in the elongation cycle of fatty acid biosynthesis.</text>
</comment>
<comment type="catalytic activity">
    <reaction>
        <text>a (3R)-hydroxyacyl-[ACP] + NADP(+) = a 3-oxoacyl-[ACP] + NADPH + H(+)</text>
        <dbReference type="Rhea" id="RHEA:17397"/>
        <dbReference type="Rhea" id="RHEA-COMP:9916"/>
        <dbReference type="Rhea" id="RHEA-COMP:9945"/>
        <dbReference type="ChEBI" id="CHEBI:15378"/>
        <dbReference type="ChEBI" id="CHEBI:57783"/>
        <dbReference type="ChEBI" id="CHEBI:58349"/>
        <dbReference type="ChEBI" id="CHEBI:78776"/>
        <dbReference type="ChEBI" id="CHEBI:78827"/>
        <dbReference type="EC" id="1.1.1.100"/>
    </reaction>
</comment>
<comment type="pathway">
    <text>Lipid metabolism; fatty acid biosynthesis.</text>
</comment>
<comment type="subunit">
    <text evidence="1">Homotetramer.</text>
</comment>
<comment type="similarity">
    <text evidence="3">Belongs to the short-chain dehydrogenases/reductases (SDR) family.</text>
</comment>
<keyword id="KW-0002">3D-structure</keyword>
<keyword id="KW-0275">Fatty acid biosynthesis</keyword>
<keyword id="KW-0276">Fatty acid metabolism</keyword>
<keyword id="KW-0444">Lipid biosynthesis</keyword>
<keyword id="KW-0443">Lipid metabolism</keyword>
<keyword id="KW-0521">NADP</keyword>
<keyword id="KW-0560">Oxidoreductase</keyword>
<keyword id="KW-1185">Reference proteome</keyword>
<reference key="1">
    <citation type="journal article" date="1999" name="J. Bacteriol.">
        <title>Characterization of a Pseudomonas aeruginosa fatty acid biosynthetic gene cluster: purification of acyl carrier protein (ACP) and malonyl-coenzyme A:ACP transacylase (fabD).</title>
        <authorList>
            <person name="Kutchma A.J."/>
            <person name="Hoang T.T."/>
            <person name="Schweizer H.P."/>
        </authorList>
    </citation>
    <scope>NUCLEOTIDE SEQUENCE [GENOMIC DNA]</scope>
    <source>
        <strain>ATCC 15692 / DSM 22644 / CIP 104116 / JCM 14847 / LMG 12228 / 1C / PRS 101 / PAO1</strain>
    </source>
</reference>
<reference key="2">
    <citation type="journal article" date="2000" name="Nature">
        <title>Complete genome sequence of Pseudomonas aeruginosa PAO1, an opportunistic pathogen.</title>
        <authorList>
            <person name="Stover C.K."/>
            <person name="Pham X.-Q.T."/>
            <person name="Erwin A.L."/>
            <person name="Mizoguchi S.D."/>
            <person name="Warrener P."/>
            <person name="Hickey M.J."/>
            <person name="Brinkman F.S.L."/>
            <person name="Hufnagle W.O."/>
            <person name="Kowalik D.J."/>
            <person name="Lagrou M."/>
            <person name="Garber R.L."/>
            <person name="Goltry L."/>
            <person name="Tolentino E."/>
            <person name="Westbrock-Wadman S."/>
            <person name="Yuan Y."/>
            <person name="Brody L.L."/>
            <person name="Coulter S.N."/>
            <person name="Folger K.R."/>
            <person name="Kas A."/>
            <person name="Larbig K."/>
            <person name="Lim R.M."/>
            <person name="Smith K.A."/>
            <person name="Spencer D.H."/>
            <person name="Wong G.K.-S."/>
            <person name="Wu Z."/>
            <person name="Paulsen I.T."/>
            <person name="Reizer J."/>
            <person name="Saier M.H. Jr."/>
            <person name="Hancock R.E.W."/>
            <person name="Lory S."/>
            <person name="Olson M.V."/>
        </authorList>
    </citation>
    <scope>NUCLEOTIDE SEQUENCE [LARGE SCALE GENOMIC DNA]</scope>
    <source>
        <strain>ATCC 15692 / DSM 22644 / CIP 104116 / JCM 14847 / LMG 12228 / 1C / PRS 101 / PAO1</strain>
    </source>
</reference>